<evidence type="ECO:0000255" key="1">
    <source>
        <dbReference type="HAMAP-Rule" id="MF_01416"/>
    </source>
</evidence>
<sequence length="177" mass="19609">MSDMTTIARPYAKAAFDFAVENGELAQWAEMLTFASEVVKNEAMQDILRSGFSADKLTEIIVSVCDEQLNEFGQNLLKVMAENGRLTMVPAVSDEFLFLKNEHEKTIEADVISAVVLEDSQLVAISQKLEQRLERKVKLNCSVDETLIAGVVIRAGDLVIDNSVRGKLNRLSDTLQS</sequence>
<protein>
    <recommendedName>
        <fullName evidence="1">ATP synthase subunit delta 1</fullName>
    </recommendedName>
    <alternativeName>
        <fullName evidence="1">ATP synthase F(1) sector subunit delta 1</fullName>
    </alternativeName>
    <alternativeName>
        <fullName evidence="1">F-type ATPase subunit delta 1</fullName>
        <shortName evidence="1">F-ATPase subunit delta 1</shortName>
    </alternativeName>
</protein>
<reference key="1">
    <citation type="journal article" date="2005" name="Science">
        <title>Life at depth: Photobacterium profundum genome sequence and expression analysis.</title>
        <authorList>
            <person name="Vezzi A."/>
            <person name="Campanaro S."/>
            <person name="D'Angelo M."/>
            <person name="Simonato F."/>
            <person name="Vitulo N."/>
            <person name="Lauro F.M."/>
            <person name="Cestaro A."/>
            <person name="Malacrida G."/>
            <person name="Simionati B."/>
            <person name="Cannata N."/>
            <person name="Romualdi C."/>
            <person name="Bartlett D.H."/>
            <person name="Valle G."/>
        </authorList>
    </citation>
    <scope>NUCLEOTIDE SEQUENCE [LARGE SCALE GENOMIC DNA]</scope>
    <source>
        <strain>ATCC BAA-1253 / SS9</strain>
    </source>
</reference>
<feature type="chain" id="PRO_0000371055" description="ATP synthase subunit delta 1">
    <location>
        <begin position="1"/>
        <end position="177"/>
    </location>
</feature>
<name>ATPD1_PHOPR</name>
<gene>
    <name evidence="1" type="primary">atpH1</name>
    <name type="ordered locus">PBPRA3607</name>
</gene>
<dbReference type="EMBL" id="CR378674">
    <property type="protein sequence ID" value="CAG21863.1"/>
    <property type="molecule type" value="Genomic_DNA"/>
</dbReference>
<dbReference type="SMR" id="Q6LLG5"/>
<dbReference type="STRING" id="298386.PBPRA3607"/>
<dbReference type="KEGG" id="ppr:PBPRA3607"/>
<dbReference type="eggNOG" id="COG0712">
    <property type="taxonomic scope" value="Bacteria"/>
</dbReference>
<dbReference type="HOGENOM" id="CLU_085114_3_0_6"/>
<dbReference type="Proteomes" id="UP000000593">
    <property type="component" value="Chromosome 1"/>
</dbReference>
<dbReference type="GO" id="GO:0005886">
    <property type="term" value="C:plasma membrane"/>
    <property type="evidence" value="ECO:0007669"/>
    <property type="project" value="UniProtKB-SubCell"/>
</dbReference>
<dbReference type="GO" id="GO:0045259">
    <property type="term" value="C:proton-transporting ATP synthase complex"/>
    <property type="evidence" value="ECO:0007669"/>
    <property type="project" value="UniProtKB-KW"/>
</dbReference>
<dbReference type="GO" id="GO:0046933">
    <property type="term" value="F:proton-transporting ATP synthase activity, rotational mechanism"/>
    <property type="evidence" value="ECO:0007669"/>
    <property type="project" value="UniProtKB-UniRule"/>
</dbReference>
<dbReference type="Gene3D" id="1.10.520.20">
    <property type="entry name" value="N-terminal domain of the delta subunit of the F1F0-ATP synthase"/>
    <property type="match status" value="1"/>
</dbReference>
<dbReference type="HAMAP" id="MF_01416">
    <property type="entry name" value="ATP_synth_delta_bact"/>
    <property type="match status" value="1"/>
</dbReference>
<dbReference type="InterPro" id="IPR026015">
    <property type="entry name" value="ATP_synth_OSCP/delta_N_sf"/>
</dbReference>
<dbReference type="InterPro" id="IPR020781">
    <property type="entry name" value="ATPase_OSCP/d_CS"/>
</dbReference>
<dbReference type="InterPro" id="IPR000711">
    <property type="entry name" value="ATPase_OSCP/dsu"/>
</dbReference>
<dbReference type="NCBIfam" id="TIGR01145">
    <property type="entry name" value="ATP_synt_delta"/>
    <property type="match status" value="1"/>
</dbReference>
<dbReference type="NCBIfam" id="NF004402">
    <property type="entry name" value="PRK05758.2-2"/>
    <property type="match status" value="1"/>
</dbReference>
<dbReference type="NCBIfam" id="NF004404">
    <property type="entry name" value="PRK05758.2-5"/>
    <property type="match status" value="1"/>
</dbReference>
<dbReference type="PANTHER" id="PTHR11910">
    <property type="entry name" value="ATP SYNTHASE DELTA CHAIN"/>
    <property type="match status" value="1"/>
</dbReference>
<dbReference type="Pfam" id="PF00213">
    <property type="entry name" value="OSCP"/>
    <property type="match status" value="1"/>
</dbReference>
<dbReference type="PRINTS" id="PR00125">
    <property type="entry name" value="ATPASEDELTA"/>
</dbReference>
<dbReference type="SUPFAM" id="SSF47928">
    <property type="entry name" value="N-terminal domain of the delta subunit of the F1F0-ATP synthase"/>
    <property type="match status" value="1"/>
</dbReference>
<dbReference type="PROSITE" id="PS00389">
    <property type="entry name" value="ATPASE_DELTA"/>
    <property type="match status" value="1"/>
</dbReference>
<accession>Q6LLG5</accession>
<organism>
    <name type="scientific">Photobacterium profundum (strain SS9)</name>
    <dbReference type="NCBI Taxonomy" id="298386"/>
    <lineage>
        <taxon>Bacteria</taxon>
        <taxon>Pseudomonadati</taxon>
        <taxon>Pseudomonadota</taxon>
        <taxon>Gammaproteobacteria</taxon>
        <taxon>Vibrionales</taxon>
        <taxon>Vibrionaceae</taxon>
        <taxon>Photobacterium</taxon>
    </lineage>
</organism>
<proteinExistence type="inferred from homology"/>
<comment type="function">
    <text evidence="1">F(1)F(0) ATP synthase produces ATP from ADP in the presence of a proton or sodium gradient. F-type ATPases consist of two structural domains, F(1) containing the extramembraneous catalytic core and F(0) containing the membrane proton channel, linked together by a central stalk and a peripheral stalk. During catalysis, ATP synthesis in the catalytic domain of F(1) is coupled via a rotary mechanism of the central stalk subunits to proton translocation.</text>
</comment>
<comment type="function">
    <text evidence="1">This protein is part of the stalk that links CF(0) to CF(1). It either transmits conformational changes from CF(0) to CF(1) or is implicated in proton conduction.</text>
</comment>
<comment type="subunit">
    <text evidence="1">F-type ATPases have 2 components, F(1) - the catalytic core - and F(0) - the membrane proton channel. F(1) has five subunits: alpha(3), beta(3), gamma(1), delta(1), epsilon(1). F(0) has three main subunits: a(1), b(2) and c(10-14). The alpha and beta chains form an alternating ring which encloses part of the gamma chain. F(1) is attached to F(0) by a central stalk formed by the gamma and epsilon chains, while a peripheral stalk is formed by the delta and b chains.</text>
</comment>
<comment type="subcellular location">
    <subcellularLocation>
        <location evidence="1">Cell inner membrane</location>
        <topology evidence="1">Peripheral membrane protein</topology>
    </subcellularLocation>
</comment>
<comment type="similarity">
    <text evidence="1">Belongs to the ATPase delta chain family.</text>
</comment>
<keyword id="KW-0066">ATP synthesis</keyword>
<keyword id="KW-0997">Cell inner membrane</keyword>
<keyword id="KW-1003">Cell membrane</keyword>
<keyword id="KW-0139">CF(1)</keyword>
<keyword id="KW-0375">Hydrogen ion transport</keyword>
<keyword id="KW-0406">Ion transport</keyword>
<keyword id="KW-0472">Membrane</keyword>
<keyword id="KW-1185">Reference proteome</keyword>
<keyword id="KW-0813">Transport</keyword>